<organism>
    <name type="scientific">Homo sapiens</name>
    <name type="common">Human</name>
    <dbReference type="NCBI Taxonomy" id="9606"/>
    <lineage>
        <taxon>Eukaryota</taxon>
        <taxon>Metazoa</taxon>
        <taxon>Chordata</taxon>
        <taxon>Craniata</taxon>
        <taxon>Vertebrata</taxon>
        <taxon>Euteleostomi</taxon>
        <taxon>Mammalia</taxon>
        <taxon>Eutheria</taxon>
        <taxon>Euarchontoglires</taxon>
        <taxon>Primates</taxon>
        <taxon>Haplorrhini</taxon>
        <taxon>Catarrhini</taxon>
        <taxon>Hominidae</taxon>
        <taxon>Homo</taxon>
    </lineage>
</organism>
<feature type="chain" id="PRO_0000230785" description="Kinesin light chain 3">
    <location>
        <begin position="1"/>
        <end position="504"/>
    </location>
</feature>
<feature type="repeat" description="TPR 1">
    <location>
        <begin position="207"/>
        <end position="240"/>
    </location>
</feature>
<feature type="repeat" description="TPR 2">
    <location>
        <begin position="249"/>
        <end position="282"/>
    </location>
</feature>
<feature type="repeat" description="TPR 3">
    <location>
        <begin position="291"/>
        <end position="324"/>
    </location>
</feature>
<feature type="repeat" description="TPR 4">
    <location>
        <begin position="333"/>
        <end position="366"/>
    </location>
</feature>
<feature type="repeat" description="TPR 5">
    <location>
        <begin position="375"/>
        <end position="408"/>
    </location>
</feature>
<feature type="region of interest" description="Disordered" evidence="4">
    <location>
        <begin position="153"/>
        <end position="197"/>
    </location>
</feature>
<feature type="region of interest" description="Disordered" evidence="4">
    <location>
        <begin position="411"/>
        <end position="438"/>
    </location>
</feature>
<feature type="region of interest" description="Disordered" evidence="4">
    <location>
        <begin position="472"/>
        <end position="504"/>
    </location>
</feature>
<feature type="coiled-coil region" evidence="3">
    <location>
        <begin position="90"/>
        <end position="150"/>
    </location>
</feature>
<feature type="compositionally biased region" description="Low complexity" evidence="4">
    <location>
        <begin position="158"/>
        <end position="167"/>
    </location>
</feature>
<feature type="compositionally biased region" description="Polar residues" evidence="4">
    <location>
        <begin position="494"/>
        <end position="504"/>
    </location>
</feature>
<feature type="modified residue" description="Phosphoserine" evidence="2">
    <location>
        <position position="173"/>
    </location>
</feature>
<feature type="modified residue" description="Phosphoserine" evidence="8 9 10 11">
    <location>
        <position position="466"/>
    </location>
</feature>
<feature type="modified residue" description="Phosphothreonine" evidence="10">
    <location>
        <position position="498"/>
    </location>
</feature>
<feature type="modified residue" description="Phosphoserine" evidence="8 10 11">
    <location>
        <position position="502"/>
    </location>
</feature>
<feature type="splice variant" id="VSP_017831" description="In isoform 3." evidence="5">
    <original>M</original>
    <variation>MIPQTPHHCSPGAAM</variation>
    <location>
        <position position="1"/>
    </location>
</feature>
<feature type="splice variant" id="VSP_017832" description="In isoform 2." evidence="6">
    <location>
        <position position="163"/>
    </location>
</feature>
<feature type="sequence conflict" description="In Ref. 2; BAC03901." evidence="7" ref="2">
    <original>V</original>
    <variation>A</variation>
    <location>
        <position position="352"/>
    </location>
</feature>
<comment type="function">
    <text evidence="2">Kinesin is a microtubule-associated force-producing protein that may play a role in organelle transport. Plays a role during spermiogenesis in the development of the sperm tail midpiece and in the normal function of spermatozoa (By similarity). May play a role in the formation of the mitochondrial sheath formation in the developing spermatid midpiece (By similarity).</text>
</comment>
<comment type="subunit">
    <text evidence="2">Oligomer composed of two heavy chains and two light chains. Associates with microtubulin in an ATP-dependent manner. Interacts with KIF5C. Interacts with ODF1 (By similarity). Interacts with LRGUK (By similarity). Interacts with VDAC2 (By similarity).</text>
</comment>
<comment type="interaction">
    <interactant intactId="EBI-1643885">
        <id>Q6P597</id>
    </interactant>
    <interactant intactId="EBI-742038">
        <id>Q9P2A4</id>
        <label>ABI3</label>
    </interactant>
    <organismsDiffer>false</organismsDiffer>
    <experiments>3</experiments>
</comment>
<comment type="interaction">
    <interactant intactId="EBI-1643885">
        <id>Q6P597</id>
    </interactant>
    <interactant intactId="EBI-21535880">
        <id>Q92870-2</id>
        <label>APBB2</label>
    </interactant>
    <organismsDiffer>false</organismsDiffer>
    <experiments>3</experiments>
</comment>
<comment type="interaction">
    <interactant intactId="EBI-1643885">
        <id>Q6P597</id>
    </interactant>
    <interactant intactId="EBI-2892592">
        <id>Q8N3I7</id>
        <label>BBS5</label>
    </interactant>
    <organismsDiffer>false</organismsDiffer>
    <experiments>3</experiments>
</comment>
<comment type="interaction">
    <interactant intactId="EBI-1643885">
        <id>Q6P597</id>
    </interactant>
    <interactant intactId="EBI-10171799">
        <id>A1A5D9</id>
        <label>BICDL2</label>
    </interactant>
    <organismsDiffer>false</organismsDiffer>
    <experiments>4</experiments>
</comment>
<comment type="interaction">
    <interactant intactId="EBI-1643885">
        <id>Q6P597</id>
    </interactant>
    <interactant intactId="EBI-741724">
        <id>Q8NA61</id>
        <label>CBY2</label>
    </interactant>
    <organismsDiffer>false</organismsDiffer>
    <experiments>3</experiments>
</comment>
<comment type="interaction">
    <interactant intactId="EBI-1643885">
        <id>Q6P597</id>
    </interactant>
    <interactant intactId="EBI-741406">
        <id>P51946</id>
        <label>CCNH</label>
    </interactant>
    <organismsDiffer>false</organismsDiffer>
    <experiments>4</experiments>
</comment>
<comment type="interaction">
    <interactant intactId="EBI-1643885">
        <id>Q6P597</id>
    </interactant>
    <interactant intactId="EBI-10250303">
        <id>Q6IPU0</id>
        <label>CENPP</label>
    </interactant>
    <organismsDiffer>false</organismsDiffer>
    <experiments>3</experiments>
</comment>
<comment type="interaction">
    <interactant intactId="EBI-1643885">
        <id>Q6P597</id>
    </interactant>
    <interactant intactId="EBI-10181988">
        <id>Q8IYX8-2</id>
        <label>CEP57L1</label>
    </interactant>
    <organismsDiffer>false</organismsDiffer>
    <experiments>3</experiments>
</comment>
<comment type="interaction">
    <interactant intactId="EBI-1643885">
        <id>Q6P597</id>
    </interactant>
    <interactant intactId="EBI-25837549">
        <id>P28329-3</id>
        <label>CHAT</label>
    </interactant>
    <organismsDiffer>false</organismsDiffer>
    <experiments>3</experiments>
</comment>
<comment type="interaction">
    <interactant intactId="EBI-1643885">
        <id>Q6P597</id>
    </interactant>
    <interactant intactId="EBI-12593112">
        <id>O75190-2</id>
        <label>DNAJB6</label>
    </interactant>
    <organismsDiffer>false</organismsDiffer>
    <experiments>3</experiments>
</comment>
<comment type="interaction">
    <interactant intactId="EBI-1643885">
        <id>Q6P597</id>
    </interactant>
    <interactant intactId="EBI-740376">
        <id>Q86UW9</id>
        <label>DTX2</label>
    </interactant>
    <organismsDiffer>false</organismsDiffer>
    <experiments>6</experiments>
</comment>
<comment type="interaction">
    <interactant intactId="EBI-1643885">
        <id>Q6P597</id>
    </interactant>
    <interactant intactId="EBI-348399">
        <id>P22607</id>
        <label>FGFR3</label>
    </interactant>
    <organismsDiffer>false</organismsDiffer>
    <experiments>3</experiments>
</comment>
<comment type="interaction">
    <interactant intactId="EBI-1643885">
        <id>Q6P597</id>
    </interactant>
    <interactant intactId="EBI-10226858">
        <id>Q0VDC6</id>
        <label>FKBP1A</label>
    </interactant>
    <organismsDiffer>false</organismsDiffer>
    <experiments>3</experiments>
</comment>
<comment type="interaction">
    <interactant intactId="EBI-1643885">
        <id>Q6P597</id>
    </interactant>
    <interactant intactId="EBI-350145">
        <id>P01112</id>
        <label>HRAS</label>
    </interactant>
    <organismsDiffer>false</organismsDiffer>
    <experiments>3</experiments>
</comment>
<comment type="interaction">
    <interactant intactId="EBI-1643885">
        <id>Q6P597</id>
    </interactant>
    <interactant intactId="EBI-356991">
        <id>P54652</id>
        <label>HSPA2</label>
    </interactant>
    <organismsDiffer>false</organismsDiffer>
    <experiments>3</experiments>
</comment>
<comment type="interaction">
    <interactant intactId="EBI-1643885">
        <id>Q6P597</id>
    </interactant>
    <interactant intactId="EBI-517086">
        <id>O43464</id>
        <label>HTRA2</label>
    </interactant>
    <organismsDiffer>false</organismsDiffer>
    <experiments>3</experiments>
</comment>
<comment type="interaction">
    <interactant intactId="EBI-1643885">
        <id>Q6P597</id>
    </interactant>
    <interactant intactId="EBI-8638439">
        <id>Q8IYA8</id>
        <label>IHO1</label>
    </interactant>
    <organismsDiffer>false</organismsDiffer>
    <experiments>3</experiments>
</comment>
<comment type="interaction">
    <interactant intactId="EBI-1643885">
        <id>Q6P597</id>
    </interactant>
    <interactant intactId="EBI-747481">
        <id>Q9NV31</id>
        <label>IMP3</label>
    </interactant>
    <organismsDiffer>false</organismsDiffer>
    <experiments>3</experiments>
</comment>
<comment type="interaction">
    <interactant intactId="EBI-1643885">
        <id>Q6P597</id>
    </interactant>
    <interactant intactId="EBI-948266">
        <id>O14901</id>
        <label>KLF11</label>
    </interactant>
    <organismsDiffer>false</organismsDiffer>
    <experiments>3</experiments>
</comment>
<comment type="interaction">
    <interactant intactId="EBI-1643885">
        <id>Q6P597</id>
    </interactant>
    <interactant intactId="EBI-10171552">
        <id>A1A4E9</id>
        <label>KRT13</label>
    </interactant>
    <organismsDiffer>false</organismsDiffer>
    <experiments>3</experiments>
</comment>
<comment type="interaction">
    <interactant intactId="EBI-1643885">
        <id>Q6P597</id>
    </interactant>
    <interactant intactId="EBI-739566">
        <id>P19012</id>
        <label>KRT15</label>
    </interactant>
    <organismsDiffer>false</organismsDiffer>
    <experiments>3</experiments>
</comment>
<comment type="interaction">
    <interactant intactId="EBI-1643885">
        <id>Q6P597</id>
    </interactant>
    <interactant intactId="EBI-10182361">
        <id>Q9NS73-5</id>
        <label>MBIP</label>
    </interactant>
    <organismsDiffer>false</organismsDiffer>
    <experiments>3</experiments>
</comment>
<comment type="interaction">
    <interactant intactId="EBI-1643885">
        <id>Q6P597</id>
    </interactant>
    <interactant intactId="EBI-715849">
        <id>O14777</id>
        <label>NDC80</label>
    </interactant>
    <organismsDiffer>false</organismsDiffer>
    <experiments>3</experiments>
</comment>
<comment type="interaction">
    <interactant intactId="EBI-1643885">
        <id>Q6P597</id>
    </interactant>
    <interactant intactId="EBI-10172876">
        <id>Q7Z6G3-2</id>
        <label>NECAB2</label>
    </interactant>
    <organismsDiffer>false</organismsDiffer>
    <experiments>3</experiments>
</comment>
<comment type="interaction">
    <interactant intactId="EBI-1643885">
        <id>Q6P597</id>
    </interactant>
    <interactant intactId="EBI-2811583">
        <id>Q9BVL2</id>
        <label>NUP58</label>
    </interactant>
    <organismsDiffer>false</organismsDiffer>
    <experiments>3</experiments>
</comment>
<comment type="interaction">
    <interactant intactId="EBI-1643885">
        <id>Q6P597</id>
    </interactant>
    <interactant intactId="EBI-1105124">
        <id>Q5VU43</id>
        <label>PDE4DIP</label>
    </interactant>
    <organismsDiffer>false</organismsDiffer>
    <experiments>3</experiments>
</comment>
<comment type="interaction">
    <interactant intactId="EBI-1643885">
        <id>Q6P597</id>
    </interactant>
    <interactant intactId="EBI-752057">
        <id>Q7Z412</id>
        <label>PEX26</label>
    </interactant>
    <organismsDiffer>false</organismsDiffer>
    <experiments>3</experiments>
</comment>
<comment type="interaction">
    <interactant intactId="EBI-1643885">
        <id>Q6P597</id>
    </interactant>
    <interactant intactId="EBI-752074">
        <id>P41219</id>
        <label>PRPH</label>
    </interactant>
    <organismsDiffer>false</organismsDiffer>
    <experiments>3</experiments>
</comment>
<comment type="interaction">
    <interactant intactId="EBI-1643885">
        <id>Q6P597</id>
    </interactant>
    <interactant intactId="EBI-347462">
        <id>P47897</id>
        <label>QARS1</label>
    </interactant>
    <organismsDiffer>false</organismsDiffer>
    <experiments>3</experiments>
</comment>
<comment type="interaction">
    <interactant intactId="EBI-1643885">
        <id>Q6P597</id>
    </interactant>
    <interactant intactId="EBI-10209725">
        <id>P47897-2</id>
        <label>QARS1</label>
    </interactant>
    <organismsDiffer>false</organismsDiffer>
    <experiments>3</experiments>
</comment>
<comment type="interaction">
    <interactant intactId="EBI-1643885">
        <id>Q6P597</id>
    </interactant>
    <interactant intactId="EBI-10244848">
        <id>Q5SQN1</id>
        <label>SNAP47</label>
    </interactant>
    <organismsDiffer>false</organismsDiffer>
    <experiments>3</experiments>
</comment>
<comment type="interaction">
    <interactant intactId="EBI-1643885">
        <id>Q6P597</id>
    </interactant>
    <interactant intactId="EBI-714135">
        <id>O75558</id>
        <label>STX11</label>
    </interactant>
    <organismsDiffer>false</organismsDiffer>
    <experiments>3</experiments>
</comment>
<comment type="interaction">
    <interactant intactId="EBI-1643885">
        <id>Q6P597</id>
    </interactant>
    <interactant intactId="EBI-533224">
        <id>P15884</id>
        <label>TCF4</label>
    </interactant>
    <organismsDiffer>false</organismsDiffer>
    <experiments>3</experiments>
</comment>
<comment type="interaction">
    <interactant intactId="EBI-1643885">
        <id>Q6P597</id>
    </interactant>
    <interactant intactId="EBI-21353855">
        <id>Q99598</id>
        <label>TSNAX</label>
    </interactant>
    <organismsDiffer>false</organismsDiffer>
    <experiments>6</experiments>
</comment>
<comment type="interaction">
    <interactant intactId="EBI-1643885">
        <id>Q6P597</id>
    </interactant>
    <interactant intactId="EBI-2799833">
        <id>Q8N1B4</id>
        <label>VPS52</label>
    </interactant>
    <organismsDiffer>false</organismsDiffer>
    <experiments>3</experiments>
</comment>
<comment type="interaction">
    <interactant intactId="EBI-1643885">
        <id>Q6P597</id>
    </interactant>
    <interactant intactId="EBI-749118">
        <id>Q9BTA9</id>
        <label>WAC</label>
    </interactant>
    <organismsDiffer>false</organismsDiffer>
    <experiments>3</experiments>
</comment>
<comment type="interaction">
    <interactant intactId="EBI-1643885">
        <id>Q6P597</id>
    </interactant>
    <interactant intactId="EBI-356498">
        <id>P62258</id>
        <label>YWHAE</label>
    </interactant>
    <organismsDiffer>false</organismsDiffer>
    <experiments>4</experiments>
</comment>
<comment type="interaction">
    <interactant intactId="EBI-1643885">
        <id>Q6P597</id>
    </interactant>
    <interactant intactId="EBI-359832">
        <id>P61981</id>
        <label>YWHAG</label>
    </interactant>
    <organismsDiffer>false</organismsDiffer>
    <experiments>4</experiments>
</comment>
<comment type="interaction">
    <interactant intactId="EBI-1643885">
        <id>Q6P597</id>
    </interactant>
    <interactant intactId="EBI-347088">
        <id>P63104</id>
        <label>YWHAZ</label>
    </interactant>
    <organismsDiffer>false</organismsDiffer>
    <experiments>4</experiments>
</comment>
<comment type="interaction">
    <interactant intactId="EBI-1643885">
        <id>Q6P597</id>
    </interactant>
    <interactant intactId="EBI-740727">
        <id>Q8TAU3</id>
        <label>ZNF417</label>
    </interactant>
    <organismsDiffer>false</organismsDiffer>
    <experiments>3</experiments>
</comment>
<comment type="interaction">
    <interactant intactId="EBI-1643885">
        <id>Q6P597</id>
    </interactant>
    <interactant intactId="EBI-10172590">
        <id>Q7Z3I7</id>
        <label>ZNF572</label>
    </interactant>
    <organismsDiffer>false</organismsDiffer>
    <experiments>3</experiments>
</comment>
<comment type="interaction">
    <interactant intactId="EBI-11033402">
        <id>Q6P597-2</id>
    </interactant>
    <interactant intactId="EBI-475646">
        <id>P07196</id>
        <label>NEFL</label>
    </interactant>
    <organismsDiffer>false</organismsDiffer>
    <experiments>3</experiments>
</comment>
<comment type="interaction">
    <interactant intactId="EBI-12076930">
        <id>Q6P597-3</id>
    </interactant>
    <interactant intactId="EBI-12811889">
        <id>Q9Y6H3</id>
        <label>ATP23</label>
    </interactant>
    <organismsDiffer>false</organismsDiffer>
    <experiments>3</experiments>
</comment>
<comment type="interaction">
    <interactant intactId="EBI-12076930">
        <id>Q6P597-3</id>
    </interactant>
    <interactant intactId="EBI-10171799">
        <id>A1A5D9</id>
        <label>BICDL2</label>
    </interactant>
    <organismsDiffer>false</organismsDiffer>
    <experiments>3</experiments>
</comment>
<comment type="interaction">
    <interactant intactId="EBI-12076930">
        <id>Q6P597-3</id>
    </interactant>
    <interactant intactId="EBI-6873363">
        <id>Q8WUE5</id>
        <label>CT55</label>
    </interactant>
    <organismsDiffer>false</organismsDiffer>
    <experiments>3</experiments>
</comment>
<comment type="interaction">
    <interactant intactId="EBI-12076930">
        <id>Q6P597-3</id>
    </interactant>
    <interactant intactId="EBI-8837113">
        <id>Q9UJP4</id>
        <label>KLHL21</label>
    </interactant>
    <organismsDiffer>false</organismsDiffer>
    <experiments>3</experiments>
</comment>
<comment type="interaction">
    <interactant intactId="EBI-12076930">
        <id>Q6P597-3</id>
    </interactant>
    <interactant intactId="EBI-634289">
        <id>Q9H0N5</id>
        <label>PCBD2</label>
    </interactant>
    <organismsDiffer>false</organismsDiffer>
    <experiments>3</experiments>
</comment>
<comment type="interaction">
    <interactant intactId="EBI-12076930">
        <id>Q6P597-3</id>
    </interactant>
    <interactant intactId="EBI-21353855">
        <id>Q99598</id>
        <label>TSNAX</label>
    </interactant>
    <organismsDiffer>false</organismsDiffer>
    <experiments>7</experiments>
</comment>
<comment type="interaction">
    <interactant intactId="EBI-12076930">
        <id>Q6P597-3</id>
    </interactant>
    <interactant intactId="EBI-739895">
        <id>Q8N6Y0</id>
        <label>USHBP1</label>
    </interactant>
    <organismsDiffer>false</organismsDiffer>
    <experiments>3</experiments>
</comment>
<comment type="subcellular location">
    <subcellularLocation>
        <location evidence="1 2">Cytoplasm</location>
        <location evidence="1 2">Cytoskeleton</location>
    </subcellularLocation>
    <subcellularLocation>
        <location evidence="2">Mitochondrion</location>
    </subcellularLocation>
    <text evidence="1 2">In elongating spermatid tail midpiece, localized in outer dense fibers (ODFs) and associates with mitochondria. Also localizes to the manchette in elongating spermatids.</text>
</comment>
<comment type="alternative products">
    <event type="alternative splicing"/>
    <isoform>
        <id>Q6P597-1</id>
        <name>1</name>
        <sequence type="displayed"/>
    </isoform>
    <isoform>
        <id>Q6P597-2</id>
        <name>2</name>
        <sequence type="described" ref="VSP_017832"/>
    </isoform>
    <isoform>
        <id>Q6P597-3</id>
        <name>3</name>
        <sequence type="described" ref="VSP_017831"/>
    </isoform>
</comment>
<comment type="domain">
    <text evidence="1">The heptad repeat (HR) motif is sufficient for interaction with kinesin heavy (KHL) chains and ODF1. The TPR region is involved in mitochondrial binding (By similarity).</text>
</comment>
<comment type="similarity">
    <text evidence="7">Belongs to the kinesin light chain family.</text>
</comment>
<reference key="1">
    <citation type="journal article" date="1996" name="Genomics">
        <title>Sequence analysis of the ERCC2 gene regions in human, mouse, and hamster reveals three linked genes.</title>
        <authorList>
            <person name="Lamerdin J.E."/>
            <person name="Stilwagen S.A."/>
            <person name="Ramirez M.H."/>
            <person name="Stubbs L."/>
            <person name="Carrano A.V."/>
        </authorList>
    </citation>
    <scope>NUCLEOTIDE SEQUENCE [GENOMIC DNA]</scope>
    <source>
        <tissue>Fibroblast</tissue>
    </source>
</reference>
<reference key="2">
    <citation type="journal article" date="2004" name="Nat. Genet.">
        <title>Complete sequencing and characterization of 21,243 full-length human cDNAs.</title>
        <authorList>
            <person name="Ota T."/>
            <person name="Suzuki Y."/>
            <person name="Nishikawa T."/>
            <person name="Otsuki T."/>
            <person name="Sugiyama T."/>
            <person name="Irie R."/>
            <person name="Wakamatsu A."/>
            <person name="Hayashi K."/>
            <person name="Sato H."/>
            <person name="Nagai K."/>
            <person name="Kimura K."/>
            <person name="Makita H."/>
            <person name="Sekine M."/>
            <person name="Obayashi M."/>
            <person name="Nishi T."/>
            <person name="Shibahara T."/>
            <person name="Tanaka T."/>
            <person name="Ishii S."/>
            <person name="Yamamoto J."/>
            <person name="Saito K."/>
            <person name="Kawai Y."/>
            <person name="Isono Y."/>
            <person name="Nakamura Y."/>
            <person name="Nagahari K."/>
            <person name="Murakami K."/>
            <person name="Yasuda T."/>
            <person name="Iwayanagi T."/>
            <person name="Wagatsuma M."/>
            <person name="Shiratori A."/>
            <person name="Sudo H."/>
            <person name="Hosoiri T."/>
            <person name="Kaku Y."/>
            <person name="Kodaira H."/>
            <person name="Kondo H."/>
            <person name="Sugawara M."/>
            <person name="Takahashi M."/>
            <person name="Kanda K."/>
            <person name="Yokoi T."/>
            <person name="Furuya T."/>
            <person name="Kikkawa E."/>
            <person name="Omura Y."/>
            <person name="Abe K."/>
            <person name="Kamihara K."/>
            <person name="Katsuta N."/>
            <person name="Sato K."/>
            <person name="Tanikawa M."/>
            <person name="Yamazaki M."/>
            <person name="Ninomiya K."/>
            <person name="Ishibashi T."/>
            <person name="Yamashita H."/>
            <person name="Murakawa K."/>
            <person name="Fujimori K."/>
            <person name="Tanai H."/>
            <person name="Kimata M."/>
            <person name="Watanabe M."/>
            <person name="Hiraoka S."/>
            <person name="Chiba Y."/>
            <person name="Ishida S."/>
            <person name="Ono Y."/>
            <person name="Takiguchi S."/>
            <person name="Watanabe S."/>
            <person name="Yosida M."/>
            <person name="Hotuta T."/>
            <person name="Kusano J."/>
            <person name="Kanehori K."/>
            <person name="Takahashi-Fujii A."/>
            <person name="Hara H."/>
            <person name="Tanase T.-O."/>
            <person name="Nomura Y."/>
            <person name="Togiya S."/>
            <person name="Komai F."/>
            <person name="Hara R."/>
            <person name="Takeuchi K."/>
            <person name="Arita M."/>
            <person name="Imose N."/>
            <person name="Musashino K."/>
            <person name="Yuuki H."/>
            <person name="Oshima A."/>
            <person name="Sasaki N."/>
            <person name="Aotsuka S."/>
            <person name="Yoshikawa Y."/>
            <person name="Matsunawa H."/>
            <person name="Ichihara T."/>
            <person name="Shiohata N."/>
            <person name="Sano S."/>
            <person name="Moriya S."/>
            <person name="Momiyama H."/>
            <person name="Satoh N."/>
            <person name="Takami S."/>
            <person name="Terashima Y."/>
            <person name="Suzuki O."/>
            <person name="Nakagawa S."/>
            <person name="Senoh A."/>
            <person name="Mizoguchi H."/>
            <person name="Goto Y."/>
            <person name="Shimizu F."/>
            <person name="Wakebe H."/>
            <person name="Hishigaki H."/>
            <person name="Watanabe T."/>
            <person name="Sugiyama A."/>
            <person name="Takemoto M."/>
            <person name="Kawakami B."/>
            <person name="Yamazaki M."/>
            <person name="Watanabe K."/>
            <person name="Kumagai A."/>
            <person name="Itakura S."/>
            <person name="Fukuzumi Y."/>
            <person name="Fujimori Y."/>
            <person name="Komiyama M."/>
            <person name="Tashiro H."/>
            <person name="Tanigami A."/>
            <person name="Fujiwara T."/>
            <person name="Ono T."/>
            <person name="Yamada K."/>
            <person name="Fujii Y."/>
            <person name="Ozaki K."/>
            <person name="Hirao M."/>
            <person name="Ohmori Y."/>
            <person name="Kawabata A."/>
            <person name="Hikiji T."/>
            <person name="Kobatake N."/>
            <person name="Inagaki H."/>
            <person name="Ikema Y."/>
            <person name="Okamoto S."/>
            <person name="Okitani R."/>
            <person name="Kawakami T."/>
            <person name="Noguchi S."/>
            <person name="Itoh T."/>
            <person name="Shigeta K."/>
            <person name="Senba T."/>
            <person name="Matsumura K."/>
            <person name="Nakajima Y."/>
            <person name="Mizuno T."/>
            <person name="Morinaga M."/>
            <person name="Sasaki M."/>
            <person name="Togashi T."/>
            <person name="Oyama M."/>
            <person name="Hata H."/>
            <person name="Watanabe M."/>
            <person name="Komatsu T."/>
            <person name="Mizushima-Sugano J."/>
            <person name="Satoh T."/>
            <person name="Shirai Y."/>
            <person name="Takahashi Y."/>
            <person name="Nakagawa K."/>
            <person name="Okumura K."/>
            <person name="Nagase T."/>
            <person name="Nomura N."/>
            <person name="Kikuchi H."/>
            <person name="Masuho Y."/>
            <person name="Yamashita R."/>
            <person name="Nakai K."/>
            <person name="Yada T."/>
            <person name="Nakamura Y."/>
            <person name="Ohara O."/>
            <person name="Isogai T."/>
            <person name="Sugano S."/>
        </authorList>
    </citation>
    <scope>NUCLEOTIDE SEQUENCE [LARGE SCALE MRNA] (ISOFORM 3)</scope>
    <source>
        <tissue>Placenta</tissue>
    </source>
</reference>
<reference key="3">
    <citation type="journal article" date="2004" name="Genome Res.">
        <title>The status, quality, and expansion of the NIH full-length cDNA project: the Mammalian Gene Collection (MGC).</title>
        <authorList>
            <consortium name="The MGC Project Team"/>
        </authorList>
    </citation>
    <scope>NUCLEOTIDE SEQUENCE [LARGE SCALE MRNA] (ISOFORMS 1 AND 2)</scope>
    <source>
        <tissue>Brain</tissue>
        <tissue>Colon</tissue>
    </source>
</reference>
<reference key="4">
    <citation type="journal article" date="2008" name="Proc. Natl. Acad. Sci. U.S.A.">
        <title>A quantitative atlas of mitotic phosphorylation.</title>
        <authorList>
            <person name="Dephoure N."/>
            <person name="Zhou C."/>
            <person name="Villen J."/>
            <person name="Beausoleil S.A."/>
            <person name="Bakalarski C.E."/>
            <person name="Elledge S.J."/>
            <person name="Gygi S.P."/>
        </authorList>
    </citation>
    <scope>PHOSPHORYLATION [LARGE SCALE ANALYSIS] AT SER-466 AND SER-502</scope>
    <scope>IDENTIFICATION BY MASS SPECTROMETRY [LARGE SCALE ANALYSIS]</scope>
    <source>
        <tissue>Cervix carcinoma</tissue>
    </source>
</reference>
<reference key="5">
    <citation type="journal article" date="2009" name="Anal. Chem.">
        <title>Lys-N and trypsin cover complementary parts of the phosphoproteome in a refined SCX-based approach.</title>
        <authorList>
            <person name="Gauci S."/>
            <person name="Helbig A.O."/>
            <person name="Slijper M."/>
            <person name="Krijgsveld J."/>
            <person name="Heck A.J."/>
            <person name="Mohammed S."/>
        </authorList>
    </citation>
    <scope>IDENTIFICATION BY MASS SPECTROMETRY [LARGE SCALE ANALYSIS]</scope>
</reference>
<reference key="6">
    <citation type="journal article" date="2009" name="Sci. Signal.">
        <title>Quantitative phosphoproteomic analysis of T cell receptor signaling reveals system-wide modulation of protein-protein interactions.</title>
        <authorList>
            <person name="Mayya V."/>
            <person name="Lundgren D.H."/>
            <person name="Hwang S.-I."/>
            <person name="Rezaul K."/>
            <person name="Wu L."/>
            <person name="Eng J.K."/>
            <person name="Rodionov V."/>
            <person name="Han D.K."/>
        </authorList>
    </citation>
    <scope>PHOSPHORYLATION [LARGE SCALE ANALYSIS] AT SER-466</scope>
    <scope>IDENTIFICATION BY MASS SPECTROMETRY [LARGE SCALE ANALYSIS]</scope>
    <source>
        <tissue>Leukemic T-cell</tissue>
    </source>
</reference>
<reference key="7">
    <citation type="journal article" date="2011" name="Sci. Signal.">
        <title>System-wide temporal characterization of the proteome and phosphoproteome of human embryonic stem cell differentiation.</title>
        <authorList>
            <person name="Rigbolt K.T."/>
            <person name="Prokhorova T.A."/>
            <person name="Akimov V."/>
            <person name="Henningsen J."/>
            <person name="Johansen P.T."/>
            <person name="Kratchmarova I."/>
            <person name="Kassem M."/>
            <person name="Mann M."/>
            <person name="Olsen J.V."/>
            <person name="Blagoev B."/>
        </authorList>
    </citation>
    <scope>PHOSPHORYLATION [LARGE SCALE ANALYSIS] AT SER-466; THR-498 AND SER-502</scope>
    <scope>IDENTIFICATION BY MASS SPECTROMETRY [LARGE SCALE ANALYSIS]</scope>
</reference>
<reference key="8">
    <citation type="journal article" date="2013" name="J. Proteome Res.">
        <title>Toward a comprehensive characterization of a human cancer cell phosphoproteome.</title>
        <authorList>
            <person name="Zhou H."/>
            <person name="Di Palma S."/>
            <person name="Preisinger C."/>
            <person name="Peng M."/>
            <person name="Polat A.N."/>
            <person name="Heck A.J."/>
            <person name="Mohammed S."/>
        </authorList>
    </citation>
    <scope>PHOSPHORYLATION [LARGE SCALE ANALYSIS] AT SER-466 AND SER-502</scope>
    <scope>IDENTIFICATION BY MASS SPECTROMETRY [LARGE SCALE ANALYSIS]</scope>
    <source>
        <tissue>Erythroleukemia</tissue>
    </source>
</reference>
<protein>
    <recommendedName>
        <fullName>Kinesin light chain 3</fullName>
    </recommendedName>
    <alternativeName>
        <fullName>KLC2-like</fullName>
    </alternativeName>
    <alternativeName>
        <fullName>kinesin light chain 2</fullName>
    </alternativeName>
</protein>
<accession>Q6P597</accession>
<accession>A0AVM3</accession>
<accession>A2RUT6</accession>
<accession>Q6GMU2</accession>
<accession>Q8NAL1</accession>
<accession>Q8WWJ9</accession>
<gene>
    <name type="primary">KLC3</name>
    <name type="synonym">KLC2</name>
    <name type="synonym">KLC2L</name>
</gene>
<evidence type="ECO:0000250" key="1">
    <source>
        <dbReference type="UniProtKB" id="Q68G30"/>
    </source>
</evidence>
<evidence type="ECO:0000250" key="2">
    <source>
        <dbReference type="UniProtKB" id="Q91W40"/>
    </source>
</evidence>
<evidence type="ECO:0000255" key="3"/>
<evidence type="ECO:0000256" key="4">
    <source>
        <dbReference type="SAM" id="MobiDB-lite"/>
    </source>
</evidence>
<evidence type="ECO:0000303" key="5">
    <source>
    </source>
</evidence>
<evidence type="ECO:0000303" key="6">
    <source>
    </source>
</evidence>
<evidence type="ECO:0000305" key="7"/>
<evidence type="ECO:0007744" key="8">
    <source>
    </source>
</evidence>
<evidence type="ECO:0007744" key="9">
    <source>
    </source>
</evidence>
<evidence type="ECO:0007744" key="10">
    <source>
    </source>
</evidence>
<evidence type="ECO:0007744" key="11">
    <source>
    </source>
</evidence>
<proteinExistence type="evidence at protein level"/>
<keyword id="KW-0025">Alternative splicing</keyword>
<keyword id="KW-0175">Coiled coil</keyword>
<keyword id="KW-0963">Cytoplasm</keyword>
<keyword id="KW-0206">Cytoskeleton</keyword>
<keyword id="KW-0221">Differentiation</keyword>
<keyword id="KW-0493">Microtubule</keyword>
<keyword id="KW-0496">Mitochondrion</keyword>
<keyword id="KW-0505">Motor protein</keyword>
<keyword id="KW-0597">Phosphoprotein</keyword>
<keyword id="KW-1267">Proteomics identification</keyword>
<keyword id="KW-1185">Reference proteome</keyword>
<keyword id="KW-0677">Repeat</keyword>
<keyword id="KW-0744">Spermatogenesis</keyword>
<keyword id="KW-0802">TPR repeat</keyword>
<dbReference type="EMBL" id="L47234">
    <property type="protein sequence ID" value="AAL48324.1"/>
    <property type="molecule type" value="Genomic_DNA"/>
</dbReference>
<dbReference type="EMBL" id="AK092481">
    <property type="protein sequence ID" value="BAC03901.1"/>
    <property type="molecule type" value="mRNA"/>
</dbReference>
<dbReference type="EMBL" id="BC062998">
    <property type="protein sequence ID" value="AAH62998.2"/>
    <property type="molecule type" value="mRNA"/>
</dbReference>
<dbReference type="EMBL" id="BC073841">
    <property type="protein sequence ID" value="AAH73841.1"/>
    <property type="molecule type" value="mRNA"/>
</dbReference>
<dbReference type="EMBL" id="BC126418">
    <property type="protein sequence ID" value="AAI26419.1"/>
    <property type="molecule type" value="mRNA"/>
</dbReference>
<dbReference type="EMBL" id="BC133037">
    <property type="protein sequence ID" value="AAI33038.1"/>
    <property type="molecule type" value="mRNA"/>
</dbReference>
<dbReference type="CCDS" id="CCDS12660.2">
    <molecule id="Q6P597-1"/>
</dbReference>
<dbReference type="RefSeq" id="NP_803136.2">
    <molecule id="Q6P597-1"/>
    <property type="nucleotide sequence ID" value="NM_177417.3"/>
</dbReference>
<dbReference type="SMR" id="Q6P597"/>
<dbReference type="BioGRID" id="127078">
    <property type="interactions" value="118"/>
</dbReference>
<dbReference type="CORUM" id="Q6P597"/>
<dbReference type="ELM" id="Q6P597"/>
<dbReference type="FunCoup" id="Q6P597">
    <property type="interactions" value="186"/>
</dbReference>
<dbReference type="IntAct" id="Q6P597">
    <property type="interactions" value="119"/>
</dbReference>
<dbReference type="MINT" id="Q6P597"/>
<dbReference type="STRING" id="9606.ENSP00000375810"/>
<dbReference type="iPTMnet" id="Q6P597"/>
<dbReference type="PhosphoSitePlus" id="Q6P597"/>
<dbReference type="BioMuta" id="KLC3"/>
<dbReference type="DMDM" id="91207086"/>
<dbReference type="jPOST" id="Q6P597"/>
<dbReference type="MassIVE" id="Q6P597"/>
<dbReference type="PaxDb" id="9606-ENSP00000375810"/>
<dbReference type="PeptideAtlas" id="Q6P597"/>
<dbReference type="ProteomicsDB" id="66995">
    <molecule id="Q6P597-1"/>
</dbReference>
<dbReference type="ProteomicsDB" id="66996">
    <molecule id="Q6P597-2"/>
</dbReference>
<dbReference type="ProteomicsDB" id="66997">
    <molecule id="Q6P597-3"/>
</dbReference>
<dbReference type="Pumba" id="Q6P597"/>
<dbReference type="TopDownProteomics" id="Q6P597-1">
    <molecule id="Q6P597-1"/>
</dbReference>
<dbReference type="TopDownProteomics" id="Q6P597-2">
    <molecule id="Q6P597-2"/>
</dbReference>
<dbReference type="Antibodypedia" id="31299">
    <property type="antibodies" value="143 antibodies from 22 providers"/>
</dbReference>
<dbReference type="DNASU" id="147700"/>
<dbReference type="Ensembl" id="ENST00000391946.7">
    <molecule id="Q6P597-1"/>
    <property type="protein sequence ID" value="ENSP00000375810.2"/>
    <property type="gene ID" value="ENSG00000104892.17"/>
</dbReference>
<dbReference type="Ensembl" id="ENST00000470402.1">
    <molecule id="Q6P597-3"/>
    <property type="protein sequence ID" value="ENSP00000436019.1"/>
    <property type="gene ID" value="ENSG00000104892.17"/>
</dbReference>
<dbReference type="Ensembl" id="ENST00000585434.5">
    <molecule id="Q6P597-2"/>
    <property type="protein sequence ID" value="ENSP00000466067.1"/>
    <property type="gene ID" value="ENSG00000104892.17"/>
</dbReference>
<dbReference type="GeneID" id="147700"/>
<dbReference type="KEGG" id="hsa:147700"/>
<dbReference type="MANE-Select" id="ENST00000391946.7">
    <property type="protein sequence ID" value="ENSP00000375810.2"/>
    <property type="RefSeq nucleotide sequence ID" value="NM_177417.3"/>
    <property type="RefSeq protein sequence ID" value="NP_803136.2"/>
</dbReference>
<dbReference type="UCSC" id="uc002pbf.2">
    <molecule id="Q6P597-1"/>
    <property type="organism name" value="human"/>
</dbReference>
<dbReference type="AGR" id="HGNC:20717"/>
<dbReference type="CTD" id="147700"/>
<dbReference type="DisGeNET" id="147700"/>
<dbReference type="GeneCards" id="KLC3"/>
<dbReference type="HGNC" id="HGNC:20717">
    <property type="gene designation" value="KLC3"/>
</dbReference>
<dbReference type="HPA" id="ENSG00000104892">
    <property type="expression patterns" value="Tissue enhanced (esophagus, skin)"/>
</dbReference>
<dbReference type="MIM" id="601334">
    <property type="type" value="gene"/>
</dbReference>
<dbReference type="neXtProt" id="NX_Q6P597"/>
<dbReference type="OpenTargets" id="ENSG00000104892"/>
<dbReference type="PharmGKB" id="PA142671588"/>
<dbReference type="VEuPathDB" id="HostDB:ENSG00000104892"/>
<dbReference type="eggNOG" id="KOG1840">
    <property type="taxonomic scope" value="Eukaryota"/>
</dbReference>
<dbReference type="GeneTree" id="ENSGT00940000162356"/>
<dbReference type="InParanoid" id="Q6P597"/>
<dbReference type="OrthoDB" id="413723at2759"/>
<dbReference type="PAN-GO" id="Q6P597">
    <property type="GO annotations" value="3 GO annotations based on evolutionary models"/>
</dbReference>
<dbReference type="PhylomeDB" id="Q6P597"/>
<dbReference type="TreeFam" id="TF314010"/>
<dbReference type="PathwayCommons" id="Q6P597"/>
<dbReference type="Reactome" id="R-HSA-2132295">
    <property type="pathway name" value="MHC class II antigen presentation"/>
</dbReference>
<dbReference type="Reactome" id="R-HSA-5625970">
    <property type="pathway name" value="RHO GTPases activate KTN1"/>
</dbReference>
<dbReference type="Reactome" id="R-HSA-6811434">
    <property type="pathway name" value="COPI-dependent Golgi-to-ER retrograde traffic"/>
</dbReference>
<dbReference type="Reactome" id="R-HSA-983189">
    <property type="pathway name" value="Kinesins"/>
</dbReference>
<dbReference type="SignaLink" id="Q6P597"/>
<dbReference type="BioGRID-ORCS" id="147700">
    <property type="hits" value="18 hits in 1154 CRISPR screens"/>
</dbReference>
<dbReference type="GeneWiki" id="KLC3"/>
<dbReference type="GenomeRNAi" id="147700"/>
<dbReference type="Pharos" id="Q6P597">
    <property type="development level" value="Tbio"/>
</dbReference>
<dbReference type="PRO" id="PR:Q6P597"/>
<dbReference type="Proteomes" id="UP000005640">
    <property type="component" value="Chromosome 19"/>
</dbReference>
<dbReference type="RNAct" id="Q6P597">
    <property type="molecule type" value="protein"/>
</dbReference>
<dbReference type="Bgee" id="ENSG00000104892">
    <property type="expression patterns" value="Expressed in upper arm skin and 154 other cell types or tissues"/>
</dbReference>
<dbReference type="ExpressionAtlas" id="Q6P597">
    <property type="expression patterns" value="baseline and differential"/>
</dbReference>
<dbReference type="GO" id="GO:0035253">
    <property type="term" value="C:ciliary rootlet"/>
    <property type="evidence" value="ECO:0007669"/>
    <property type="project" value="Ensembl"/>
</dbReference>
<dbReference type="GO" id="GO:0005737">
    <property type="term" value="C:cytoplasm"/>
    <property type="evidence" value="ECO:0000318"/>
    <property type="project" value="GO_Central"/>
</dbReference>
<dbReference type="GO" id="GO:0005871">
    <property type="term" value="C:kinesin complex"/>
    <property type="evidence" value="ECO:0007669"/>
    <property type="project" value="InterPro"/>
</dbReference>
<dbReference type="GO" id="GO:0005874">
    <property type="term" value="C:microtubule"/>
    <property type="evidence" value="ECO:0007669"/>
    <property type="project" value="UniProtKB-KW"/>
</dbReference>
<dbReference type="GO" id="GO:0005739">
    <property type="term" value="C:mitochondrion"/>
    <property type="evidence" value="ECO:0000250"/>
    <property type="project" value="UniProtKB"/>
</dbReference>
<dbReference type="GO" id="GO:0031514">
    <property type="term" value="C:motile cilium"/>
    <property type="evidence" value="ECO:0007669"/>
    <property type="project" value="Ensembl"/>
</dbReference>
<dbReference type="GO" id="GO:0043005">
    <property type="term" value="C:neuron projection"/>
    <property type="evidence" value="ECO:0007669"/>
    <property type="project" value="Ensembl"/>
</dbReference>
<dbReference type="GO" id="GO:0019894">
    <property type="term" value="F:kinesin binding"/>
    <property type="evidence" value="ECO:0000318"/>
    <property type="project" value="GO_Central"/>
</dbReference>
<dbReference type="GO" id="GO:0008017">
    <property type="term" value="F:microtubule binding"/>
    <property type="evidence" value="ECO:0007669"/>
    <property type="project" value="Ensembl"/>
</dbReference>
<dbReference type="GO" id="GO:0008088">
    <property type="term" value="P:axo-dendritic transport"/>
    <property type="evidence" value="ECO:0007669"/>
    <property type="project" value="Ensembl"/>
</dbReference>
<dbReference type="GO" id="GO:0007018">
    <property type="term" value="P:microtubule-based movement"/>
    <property type="evidence" value="ECO:0000318"/>
    <property type="project" value="GO_Central"/>
</dbReference>
<dbReference type="GO" id="GO:0120317">
    <property type="term" value="P:sperm mitochondrial sheath assembly"/>
    <property type="evidence" value="ECO:0000250"/>
    <property type="project" value="UniProtKB"/>
</dbReference>
<dbReference type="GO" id="GO:0007286">
    <property type="term" value="P:spermatid development"/>
    <property type="evidence" value="ECO:0000250"/>
    <property type="project" value="UniProtKB"/>
</dbReference>
<dbReference type="GO" id="GO:0007283">
    <property type="term" value="P:spermatogenesis"/>
    <property type="evidence" value="ECO:0000250"/>
    <property type="project" value="UniProtKB"/>
</dbReference>
<dbReference type="FunFam" id="1.25.40.10:FF:000003">
    <property type="entry name" value="kinesin light chain isoform X1"/>
    <property type="match status" value="1"/>
</dbReference>
<dbReference type="Gene3D" id="1.25.40.10">
    <property type="entry name" value="Tetratricopeptide repeat domain"/>
    <property type="match status" value="1"/>
</dbReference>
<dbReference type="InterPro" id="IPR002151">
    <property type="entry name" value="Kinesin_light"/>
</dbReference>
<dbReference type="InterPro" id="IPR011990">
    <property type="entry name" value="TPR-like_helical_dom_sf"/>
</dbReference>
<dbReference type="InterPro" id="IPR019734">
    <property type="entry name" value="TPR_rpt"/>
</dbReference>
<dbReference type="PANTHER" id="PTHR45783">
    <property type="entry name" value="KINESIN LIGHT CHAIN"/>
    <property type="match status" value="1"/>
</dbReference>
<dbReference type="PANTHER" id="PTHR45783:SF1">
    <property type="entry name" value="KINESIN LIGHT CHAIN 3"/>
    <property type="match status" value="1"/>
</dbReference>
<dbReference type="Pfam" id="PF13424">
    <property type="entry name" value="TPR_12"/>
    <property type="match status" value="2"/>
</dbReference>
<dbReference type="PRINTS" id="PR00381">
    <property type="entry name" value="KINESINLIGHT"/>
</dbReference>
<dbReference type="SMART" id="SM00028">
    <property type="entry name" value="TPR"/>
    <property type="match status" value="4"/>
</dbReference>
<dbReference type="SUPFAM" id="SSF48452">
    <property type="entry name" value="TPR-like"/>
    <property type="match status" value="1"/>
</dbReference>
<dbReference type="PROSITE" id="PS50005">
    <property type="entry name" value="TPR"/>
    <property type="match status" value="4"/>
</dbReference>
<dbReference type="PROSITE" id="PS50293">
    <property type="entry name" value="TPR_REGION"/>
    <property type="match status" value="1"/>
</dbReference>
<name>KLC3_HUMAN</name>
<sequence length="504" mass="55364">MSVQVAAPGSAGLGPERLSPEELVRQTRQVVQGLEALRAEHHGLAGHLAEALAGQGPAAGLEMLEEKQQVVSHSLEAIELGLGEAQVLLALSAHVGALEAEKQRLRSQARRLAQENVWLREELEETQRRLRASEESVAQLEEEKRHLEFLGQLRQYDPPAESQQSESPPRRDSLASLFPSEEEERKGPEAAGAAAAQQGGYEIPARLRTLHNLVIQYAGQGRYEVAVPLCRQALEDLERSSGHCHPDVATMLNILALVYRDQNKYKEATDLLHDALQIREQTLGPEHPAVAATLNNLAVLYGKRGRYREAEPLCQRALEIREKVLGADHPDVAKQLNNLALLCQNQGKFEDVERHYARALSIYEALGGPHDPNVAKTKNNLASAYLKQNKYQQAEELYKEILHKEDLPAPLGAPNTGTAGDAEQALRRSSSLSKIRESIRRGSEKLVSRLRGEAAAGAAGMKRAMSLNTLNVDAPRAPGTQFPSWHLDKAPRTLSASTQDLSPH</sequence>